<organism>
    <name type="scientific">Rattus norvegicus</name>
    <name type="common">Rat</name>
    <dbReference type="NCBI Taxonomy" id="10116"/>
    <lineage>
        <taxon>Eukaryota</taxon>
        <taxon>Metazoa</taxon>
        <taxon>Chordata</taxon>
        <taxon>Craniata</taxon>
        <taxon>Vertebrata</taxon>
        <taxon>Euteleostomi</taxon>
        <taxon>Mammalia</taxon>
        <taxon>Eutheria</taxon>
        <taxon>Euarchontoglires</taxon>
        <taxon>Glires</taxon>
        <taxon>Rodentia</taxon>
        <taxon>Myomorpha</taxon>
        <taxon>Muroidea</taxon>
        <taxon>Muridae</taxon>
        <taxon>Murinae</taxon>
        <taxon>Rattus</taxon>
    </lineage>
</organism>
<proteinExistence type="evidence at protein level"/>
<feature type="chain" id="PRO_0000079231" description="Electrogenic sodium bicarbonate cotransporter 1">
    <location>
        <begin position="1"/>
        <end position="1079"/>
    </location>
</feature>
<feature type="topological domain" description="Cytoplasmic" evidence="4">
    <location>
        <begin position="1"/>
        <end position="466"/>
    </location>
</feature>
<feature type="transmembrane region" description="Helical; Name=1" evidence="4">
    <location>
        <begin position="467"/>
        <end position="491"/>
    </location>
</feature>
<feature type="topological domain" description="Extracellular" evidence="4">
    <location>
        <begin position="492"/>
        <end position="501"/>
    </location>
</feature>
<feature type="transmembrane region" description="Helical; Name=2" evidence="4">
    <location>
        <begin position="502"/>
        <end position="520"/>
    </location>
</feature>
<feature type="topological domain" description="Cytoplasmic" evidence="4">
    <location>
        <position position="521"/>
    </location>
</feature>
<feature type="transmembrane region" description="Discontinuously helical; Name=3" evidence="4">
    <location>
        <begin position="522"/>
        <end position="542"/>
    </location>
</feature>
<feature type="topological domain" description="Extracellular" evidence="4">
    <location>
        <begin position="543"/>
        <end position="550"/>
    </location>
</feature>
<feature type="transmembrane region" description="Helical; Name=4" evidence="4">
    <location>
        <begin position="551"/>
        <end position="571"/>
    </location>
</feature>
<feature type="topological domain" description="Cytoplasmic" evidence="4">
    <location>
        <begin position="572"/>
        <end position="585"/>
    </location>
</feature>
<feature type="transmembrane region" description="Helical; Name=5" evidence="4">
    <location>
        <begin position="586"/>
        <end position="609"/>
    </location>
</feature>
<feature type="topological domain" description="Extracellular" evidence="4">
    <location>
        <begin position="610"/>
        <end position="692"/>
    </location>
</feature>
<feature type="transmembrane region" description="Helical; Name=6" evidence="4">
    <location>
        <begin position="693"/>
        <end position="710"/>
    </location>
</feature>
<feature type="topological domain" description="Cytoplasmic" evidence="4">
    <location>
        <begin position="711"/>
        <end position="725"/>
    </location>
</feature>
<feature type="transmembrane region" description="Helical; Name=7" evidence="4">
    <location>
        <begin position="726"/>
        <end position="745"/>
    </location>
</feature>
<feature type="topological domain" description="Extracellular" evidence="4">
    <location>
        <begin position="746"/>
        <end position="779"/>
    </location>
</feature>
<feature type="transmembrane region" description="Helical; Name=8" evidence="4">
    <location>
        <begin position="780"/>
        <end position="807"/>
    </location>
</feature>
<feature type="topological domain" description="Cytoplasmic" evidence="4">
    <location>
        <begin position="808"/>
        <end position="819"/>
    </location>
</feature>
<feature type="transmembrane region" description="Helical; Name=9" evidence="4">
    <location>
        <begin position="820"/>
        <end position="836"/>
    </location>
</feature>
<feature type="topological domain" description="Extracellular" evidence="4">
    <location>
        <position position="837"/>
    </location>
</feature>
<feature type="transmembrane region" description="Discontinuously helical; Name=10" evidence="4">
    <location>
        <begin position="838"/>
        <end position="855"/>
    </location>
</feature>
<feature type="topological domain" description="Cytoplasmic" evidence="4">
    <location>
        <begin position="856"/>
        <end position="877"/>
    </location>
</feature>
<feature type="transmembrane region" description="Helical; Name=11" evidence="4">
    <location>
        <begin position="878"/>
        <end position="894"/>
    </location>
</feature>
<feature type="topological domain" description="Extracellular" evidence="4">
    <location>
        <begin position="895"/>
        <end position="901"/>
    </location>
</feature>
<feature type="transmembrane region" description="Helical; Name=12" evidence="4">
    <location>
        <begin position="902"/>
        <end position="918"/>
    </location>
</feature>
<feature type="topological domain" description="Cytoplasmic" evidence="4">
    <location>
        <begin position="919"/>
        <end position="960"/>
    </location>
</feature>
<feature type="intramembrane region" description="Discontinuously helical" evidence="4">
    <location>
        <begin position="961"/>
        <end position="986"/>
    </location>
</feature>
<feature type="topological domain" description="Cytoplasmic" evidence="4">
    <location>
        <begin position="987"/>
        <end position="1079"/>
    </location>
</feature>
<feature type="region of interest" description="Required for interaction with AHCYL1" evidence="4">
    <location>
        <begin position="1"/>
        <end position="62"/>
    </location>
</feature>
<feature type="region of interest" description="Disordered" evidence="6">
    <location>
        <begin position="39"/>
        <end position="78"/>
    </location>
</feature>
<feature type="region of interest" description="Disordered" evidence="6">
    <location>
        <begin position="235"/>
        <end position="266"/>
    </location>
</feature>
<feature type="region of interest" description="Interaction with CA4" evidence="1">
    <location>
        <begin position="748"/>
        <end position="779"/>
    </location>
</feature>
<feature type="region of interest" description="CA2-binding" evidence="1">
    <location>
        <begin position="1002"/>
        <end position="1004"/>
    </location>
</feature>
<feature type="region of interest" description="Disordered" evidence="6">
    <location>
        <begin position="1012"/>
        <end position="1079"/>
    </location>
</feature>
<feature type="region of interest" description="CA2-binding" evidence="1">
    <location>
        <begin position="1030"/>
        <end position="1033"/>
    </location>
</feature>
<feature type="region of interest" description="Required for basolateral targeting" evidence="1">
    <location>
        <begin position="1057"/>
        <end position="1059"/>
    </location>
</feature>
<feature type="compositionally biased region" description="Basic residues" evidence="6">
    <location>
        <begin position="39"/>
        <end position="52"/>
    </location>
</feature>
<feature type="compositionally biased region" description="Basic and acidic residues" evidence="6">
    <location>
        <begin position="53"/>
        <end position="70"/>
    </location>
</feature>
<feature type="compositionally biased region" description="Polar residues" evidence="6">
    <location>
        <begin position="251"/>
        <end position="260"/>
    </location>
</feature>
<feature type="compositionally biased region" description="Basic and acidic residues" evidence="6">
    <location>
        <begin position="1062"/>
        <end position="1079"/>
    </location>
</feature>
<feature type="site" description="Not glycosylated">
    <location>
        <position position="636"/>
    </location>
</feature>
<feature type="modified residue" description="Phosphotyrosine" evidence="2">
    <location>
        <position position="30"/>
    </location>
</feature>
<feature type="modified residue" description="Phosphoserine" evidence="2">
    <location>
        <position position="61"/>
    </location>
</feature>
<feature type="modified residue" description="Phosphoserine" evidence="22">
    <location>
        <position position="65"/>
    </location>
</feature>
<feature type="modified residue" description="Phosphoserine" evidence="22">
    <location>
        <position position="68"/>
    </location>
</feature>
<feature type="modified residue" description="Phosphoserine" evidence="2">
    <location>
        <position position="223"/>
    </location>
</feature>
<feature type="modified residue" description="Phosphoserine" evidence="2">
    <location>
        <position position="232"/>
    </location>
</feature>
<feature type="modified residue" description="Phosphoserine" evidence="2">
    <location>
        <position position="233"/>
    </location>
</feature>
<feature type="modified residue" description="Phosphoserine" evidence="22">
    <location>
        <position position="245"/>
    </location>
</feature>
<feature type="modified residue" description="Phosphothreonine" evidence="22">
    <location>
        <position position="249"/>
    </location>
</feature>
<feature type="modified residue" description="Phosphothreonine" evidence="22">
    <location>
        <position position="254"/>
    </location>
</feature>
<feature type="modified residue" description="Phosphoserine" evidence="2">
    <location>
        <position position="256"/>
    </location>
</feature>
<feature type="modified residue" description="Phosphoserine" evidence="22">
    <location>
        <position position="257"/>
    </location>
</feature>
<feature type="modified residue" description="Phosphoserine" evidence="22">
    <location>
        <position position="262"/>
    </location>
</feature>
<feature type="modified residue" description="Phosphoserine; by PKA" evidence="4">
    <location>
        <position position="1026"/>
    </location>
</feature>
<feature type="modified residue" description="Phosphoserine" evidence="22">
    <location>
        <position position="1029"/>
    </location>
</feature>
<feature type="modified residue" description="Phosphoserine" evidence="22">
    <location>
        <position position="1034"/>
    </location>
</feature>
<feature type="modified residue" description="Phosphoserine" evidence="2">
    <location>
        <position position="1044"/>
    </location>
</feature>
<feature type="modified residue" description="Phosphoserine" evidence="22">
    <location>
        <position position="1069"/>
    </location>
</feature>
<feature type="splice variant" id="VSP_016717" description="In isoform 2." evidence="18 19">
    <location>
        <begin position="1"/>
        <end position="44"/>
    </location>
</feature>
<feature type="splice variant" id="VSP_016718" description="In isoform 2." evidence="18 19">
    <original>HKRKAGHKEKKEKERISENYSDKSDVENADESSSSILKPLI</original>
    <variation>MSTENVEGKPNNLGERGRARSSTFLRVFQPMFNHSIFTSAV</variation>
    <location>
        <begin position="45"/>
        <end position="85"/>
    </location>
</feature>
<feature type="splice variant" id="VSP_016719" description="In isoform 3." evidence="17">
    <original>SDCPYSEKVPSIKIPMDITEQQPFLSDNKPLDRERSSTFLERHTSC</original>
    <variation>EKDPQHSLNATHHADKIPFLESLGLPSPPRSPVKVVPQIRIELESEDNDYLWRNKGTETTL</variation>
    <location>
        <begin position="1034"/>
        <end position="1079"/>
    </location>
</feature>
<feature type="sequence conflict" description="In Ref. 2; AAB83997 and 4; AAF21040." evidence="20" ref="2 4">
    <original>AS</original>
    <variation>VP</variation>
    <location>
        <begin position="284"/>
        <end position="285"/>
    </location>
</feature>
<feature type="sequence conflict" description="In Ref. 2; AAB83997 and 4; AAF21040." evidence="20" ref="2 4">
    <original>A</original>
    <variation>G</variation>
    <location>
        <position position="479"/>
    </location>
</feature>
<feature type="sequence conflict" description="In Ref. 2; AAB83997." evidence="20" ref="2">
    <original>S</original>
    <variation>Y</variation>
    <location>
        <position position="640"/>
    </location>
</feature>
<feature type="sequence conflict" description="In Ref. 2; AAB83997." evidence="20" ref="2">
    <original>S</original>
    <variation>F</variation>
    <location>
        <position position="655"/>
    </location>
</feature>
<feature type="sequence conflict" description="In Ref. 2; AAB83997 and 4; AAF21040." evidence="20" ref="2 4">
    <original>A</original>
    <variation>P</variation>
    <location>
        <position position="803"/>
    </location>
</feature>
<feature type="modified residue" description="Phosphoserine" evidence="22">
    <location sequence="Q9JI66-2">
        <position position="2"/>
    </location>
</feature>
<feature type="glycosylation site" description="N-linked (GlcNAc) asparagine" evidence="12">
    <location sequence="Q9JI66-2">
        <position position="597"/>
    </location>
</feature>
<feature type="glycosylation site" description="N-linked (GlcNAc) asparagine" evidence="12">
    <location sequence="Q9JI66-2">
        <position position="617"/>
    </location>
</feature>
<feature type="mutagenesis site" description="No effect on N-glycosylation." evidence="12">
    <original>N</original>
    <variation>Q</variation>
    <location sequence="Q9JI66-2">
        <position position="33"/>
    </location>
</feature>
<feature type="mutagenesis site" description="No effect on N-glycosylation." evidence="12">
    <original>N</original>
    <variation>Q</variation>
    <location sequence="Q9JI66-2">
        <position position="199"/>
    </location>
</feature>
<feature type="mutagenesis site" description="No effect on N-glycosylation." evidence="12">
    <original>N</original>
    <variation>Q</variation>
    <location sequence="Q9JI66-2">
        <position position="208"/>
    </location>
</feature>
<feature type="mutagenesis site" description="No effect on N-glycosylation." evidence="12">
    <original>N</original>
    <variation>Q</variation>
    <location sequence="Q9JI66-2">
        <position position="497"/>
    </location>
</feature>
<feature type="mutagenesis site" description="No effect on N-glycosylation. Complete loss of N-glycosylation without effect on transporter basic function; when associated with Q-597 and Q-617." evidence="12">
    <original>N</original>
    <variation>Q</variation>
    <location sequence="Q9JI66-2">
        <position position="592"/>
    </location>
</feature>
<feature type="mutagenesis site" description="Reduces the extent of N-glycosylation. Complete loss of N-glycosylation without effect on transporter basic function; when associated with Q-592 and Q-617." evidence="12">
    <original>N</original>
    <variation>Q</variation>
    <location sequence="Q9JI66-2">
        <position position="597"/>
    </location>
</feature>
<feature type="mutagenesis site" description="Reduces the extent of N-glycosylation. Complete loss of N-glycosylation without effect on transporter basic function; when associated with Q-592 and Q-597." evidence="12">
    <original>N</original>
    <variation>Q</variation>
    <location sequence="Q9JI66-2">
        <position position="617"/>
    </location>
</feature>
<feature type="modified residue" description="Phosphoserine" evidence="22">
    <location sequence="Q9JI66-3">
        <position position="1026"/>
    </location>
</feature>
<feature type="modified residue" description="Phosphoserine" evidence="22">
    <location sequence="Q9JI66-3">
        <position position="1029"/>
    </location>
</feature>
<feature type="modified residue" description="Phosphoserine" evidence="22">
    <location sequence="Q9JI66-3">
        <position position="1060"/>
    </location>
</feature>
<feature type="modified residue" description="Phosphoserine" evidence="22">
    <location sequence="Q9JI66-3">
        <position position="1064"/>
    </location>
</feature>
<feature type="modified residue" description="Phosphoserine" evidence="22">
    <location sequence="Q9JI66-3">
        <position position="1078"/>
    </location>
</feature>
<keyword id="KW-0025">Alternative splicing</keyword>
<keyword id="KW-1003">Cell membrane</keyword>
<keyword id="KW-0406">Ion transport</keyword>
<keyword id="KW-0472">Membrane</keyword>
<keyword id="KW-0597">Phosphoprotein</keyword>
<keyword id="KW-1185">Reference proteome</keyword>
<keyword id="KW-0915">Sodium</keyword>
<keyword id="KW-0739">Sodium transport</keyword>
<keyword id="KW-0769">Symport</keyword>
<keyword id="KW-0812">Transmembrane</keyword>
<keyword id="KW-1133">Transmembrane helix</keyword>
<keyword id="KW-0813">Transport</keyword>
<protein>
    <recommendedName>
        <fullName>Electrogenic sodium bicarbonate cotransporter 1</fullName>
        <shortName>Sodium bicarbonate cotransporter</shortName>
    </recommendedName>
    <alternativeName>
        <fullName>NBC-like protein</fullName>
    </alternativeName>
    <alternativeName>
        <fullName>Na(+)/HCO3(-) cotransporter</fullName>
    </alternativeName>
    <alternativeName>
        <fullName>Solute carrier family 4 member 4</fullName>
    </alternativeName>
</protein>
<evidence type="ECO:0000250" key="1"/>
<evidence type="ECO:0000250" key="2">
    <source>
        <dbReference type="UniProtKB" id="O88343"/>
    </source>
</evidence>
<evidence type="ECO:0000250" key="3">
    <source>
        <dbReference type="UniProtKB" id="Q9GL77"/>
    </source>
</evidence>
<evidence type="ECO:0000250" key="4">
    <source>
        <dbReference type="UniProtKB" id="Q9Y6R1"/>
    </source>
</evidence>
<evidence type="ECO:0000255" key="5"/>
<evidence type="ECO:0000256" key="6">
    <source>
        <dbReference type="SAM" id="MobiDB-lite"/>
    </source>
</evidence>
<evidence type="ECO:0000269" key="7">
    <source>
    </source>
</evidence>
<evidence type="ECO:0000269" key="8">
    <source>
    </source>
</evidence>
<evidence type="ECO:0000269" key="9">
    <source>
    </source>
</evidence>
<evidence type="ECO:0000269" key="10">
    <source>
    </source>
</evidence>
<evidence type="ECO:0000269" key="11">
    <source>
    </source>
</evidence>
<evidence type="ECO:0000269" key="12">
    <source>
    </source>
</evidence>
<evidence type="ECO:0000269" key="13">
    <source>
    </source>
</evidence>
<evidence type="ECO:0000269" key="14">
    <source>
    </source>
</evidence>
<evidence type="ECO:0000269" key="15">
    <source>
    </source>
</evidence>
<evidence type="ECO:0000269" key="16">
    <source>
    </source>
</evidence>
<evidence type="ECO:0000303" key="17">
    <source>
    </source>
</evidence>
<evidence type="ECO:0000303" key="18">
    <source>
    </source>
</evidence>
<evidence type="ECO:0000303" key="19">
    <source>
    </source>
</evidence>
<evidence type="ECO:0000305" key="20"/>
<evidence type="ECO:0000305" key="21">
    <source>
    </source>
</evidence>
<evidence type="ECO:0007744" key="22">
    <source>
    </source>
</evidence>
<name>S4A4_RAT</name>
<reference key="1">
    <citation type="journal article" date="1998" name="Am. J. Physiol.">
        <title>Cloning and functional expression of rNBC, an electrogenic Na(+)-HCO3-cotransporter from rat kidney.</title>
        <authorList>
            <person name="Romero M.F."/>
            <person name="Fong P."/>
            <person name="Berger U.V."/>
            <person name="Hediger M.A."/>
            <person name="Boron W.F."/>
        </authorList>
    </citation>
    <scope>NUCLEOTIDE SEQUENCE [MRNA] (ISOFORM 2)</scope>
    <scope>FUNCTION</scope>
    <scope>TISSUE SPECIFICITY</scope>
    <scope>SUBCELLULAR LOCATION</scope>
    <scope>TRANSPORTER ACTIVITY</scope>
    <source>
        <tissue>Kidney cortex</tissue>
    </source>
</reference>
<reference key="2">
    <citation type="journal article" date="1998" name="Am. J. Physiol.">
        <title>Cloning, renal distribution, and regulation of the rat Na+-HCO3-cotransporter.</title>
        <authorList>
            <person name="Burnham C.E."/>
            <person name="Flagella M."/>
            <person name="Wang Z."/>
            <person name="Amlal H."/>
            <person name="Shull G.E."/>
            <person name="Soleimani M."/>
        </authorList>
    </citation>
    <scope>NUCLEOTIDE SEQUENCE [MRNA] (ISOFORM 2)</scope>
    <scope>TISSUE SPECIFICITY</scope>
    <scope>INDUCTION</scope>
    <source>
        <strain>Sprague-Dawley</strain>
        <tissue>Kidney</tissue>
    </source>
</reference>
<reference key="3">
    <citation type="journal article" date="2000" name="Am. J. Physiol.">
        <title>An electrogenic Na(+)-HCO3(-) cotransporter (NBC) with a novel COOH-terminus, cloned from rat brain.</title>
        <authorList>
            <person name="Bevensee M.O."/>
            <person name="Schmitt B.M."/>
            <person name="Choi I."/>
            <person name="Romero M.F."/>
            <person name="Boron W.F."/>
        </authorList>
    </citation>
    <scope>NUCLEOTIDE SEQUENCE [MRNA] (ISOFORMS 1 AND 3)</scope>
    <scope>FUNCTION</scope>
    <scope>ACTIVITY REGULATION</scope>
    <scope>TISSUE SPECIFICITY</scope>
    <scope>TRANSPORTER ACTIVITY</scope>
    <source>
        <tissue>Brain</tissue>
    </source>
</reference>
<reference key="4">
    <citation type="journal article" date="2000" name="J. Neurosci.">
        <title>The electrogenic sodium bicarbonate cotransporter: developmental expression in rat brain and possible role in acid vulnerability.</title>
        <authorList>
            <person name="Giffard R.G."/>
            <person name="Papadopoulos M.C."/>
            <person name="van Hooft J.A."/>
            <person name="Xu L."/>
            <person name="Giuffrida R."/>
            <person name="Monyer H."/>
        </authorList>
    </citation>
    <scope>NUCLEOTIDE SEQUENCE [MRNA] (ISOFORM 1)</scope>
    <scope>FUNCTION</scope>
    <scope>TISSUE SPECIFICITY</scope>
    <scope>DEVELOPMENTAL STAGE</scope>
    <scope>TRANSPORTER ACTIVITY</scope>
    <source>
        <tissue>Brain</tissue>
    </source>
</reference>
<reference key="5">
    <citation type="journal article" date="2001" name="Am. J. Physiol.">
        <title>Immunolocalization of electrogenic sodium-bicarbonate cotransporters pNBC1 and kNBC1 in the rat eye.</title>
        <authorList>
            <person name="Bok D."/>
            <person name="Schibler M.J."/>
            <person name="Pushkin A."/>
            <person name="Sassani P."/>
            <person name="Abuladze N."/>
            <person name="Naser Z."/>
            <person name="Kurtz I."/>
        </authorList>
    </citation>
    <scope>TISSUE SPECIFICITY</scope>
</reference>
<reference key="6">
    <citation type="journal article" date="2001" name="Kidney Int.">
        <title>Coordinated down-regulation of NBC-1 and NHE-3 in sodium and bicarbonate loading.</title>
        <authorList>
            <person name="Amlal H."/>
            <person name="Chen Q."/>
            <person name="Greeley T."/>
            <person name="Pavelic L."/>
            <person name="Soleimani M."/>
        </authorList>
    </citation>
    <scope>INDUCTION</scope>
</reference>
<reference key="7">
    <citation type="journal article" date="2003" name="Am. J. Physiol.">
        <title>Localization of Na+-HCO-3 cotransporter (NBC-1) variants in rat and human pancreas.</title>
        <authorList>
            <person name="Satoh H."/>
            <person name="Moriyama N."/>
            <person name="Hara C."/>
            <person name="Yamada H."/>
            <person name="Horita S."/>
            <person name="Kunimi M."/>
            <person name="Tsukamoto K."/>
            <person name="Iso-O N."/>
            <person name="Inatomi J."/>
            <person name="Kawakami H."/>
            <person name="Kudo A."/>
            <person name="Endou H."/>
            <person name="Igarashi T."/>
            <person name="Goto A."/>
            <person name="Fujita T."/>
            <person name="Seki G."/>
        </authorList>
    </citation>
    <scope>TISSUE SPECIFICITY</scope>
</reference>
<reference key="8">
    <citation type="journal article" date="2003" name="Am. J. Physiol.">
        <title>Role of glycosylation in the renal electrogenic Na+-HCO3-cotransporter (NBCe1).</title>
        <authorList>
            <person name="Choi I."/>
            <person name="Hu L."/>
            <person name="Rojas J.D."/>
            <person name="Schmitt B.M."/>
            <person name="Boron W.F."/>
        </authorList>
    </citation>
    <scope>MUTAGENESIS OF ASN-33; ASN-199; ASN-208; ASN-497; ASN-592; ASN-597 AND ASN-617 (ISOFORM 2)</scope>
    <scope>GLYCOSYLATION AT ASN-597 AND ASN-617 (ISOFORM 2)</scope>
    <scope>FUNCTION</scope>
    <scope>TRANSPORTER ACTIVITY</scope>
</reference>
<reference key="9">
    <citation type="journal article" date="2004" name="Acta Physiol. Scand.">
        <title>Expression of Na+/HCO3- co-transporter proteins (NBCs) in rat and human skeletal muscle.</title>
        <authorList>
            <person name="Kristensen J.M."/>
            <person name="Kristensen M."/>
            <person name="Juel C."/>
        </authorList>
    </citation>
    <scope>TISSUE SPECIFICITY</scope>
</reference>
<reference key="10">
    <citation type="journal article" date="2005" name="Toxicol. Appl. Pharmacol.">
        <title>Inhibition of renal Na+/H+ exchange in cadmium-intoxicated rats.</title>
        <authorList>
            <person name="Ahn D.-W."/>
            <person name="Chung J.-M."/>
            <person name="Kim J.-Y."/>
            <person name="Kim K.-R."/>
            <person name="Park Y.-S."/>
        </authorList>
    </citation>
    <scope>INDUCTION</scope>
</reference>
<reference key="11">
    <citation type="journal article" date="2012" name="Nat. Commun.">
        <title>Quantitative maps of protein phosphorylation sites across 14 different rat organs and tissues.</title>
        <authorList>
            <person name="Lundby A."/>
            <person name="Secher A."/>
            <person name="Lage K."/>
            <person name="Nordsborg N.B."/>
            <person name="Dmytriyev A."/>
            <person name="Lundby C."/>
            <person name="Olsen J.V."/>
        </authorList>
    </citation>
    <scope>PHOSPHORYLATION [LARGE SCALE ANALYSIS] AT SER-65; SER-68; SER-245; THR-249; THR-254; SER-257; SER-262; SER-1029; SER-1034 AND SER-1069</scope>
    <scope>PHOSPHORYLATION [LARGE SCALE ANALYSIS] AT SER-2 (ISOFORM 2)</scope>
    <scope>PHOSPHORYLATION [LARGE SCALE ANALYSIS] AT SER-1026; SER-1029; SER-1060; SER-1064 AND SER-1078 (ISOFORM 3)</scope>
    <scope>IDENTIFICATION BY MASS SPECTROMETRY [LARGE SCALE ANALYSIS]</scope>
</reference>
<sequence>MEDEAVLDRGASFLKHVCDEEEVEGHHTIYIGVHVPKSYRRRRRHKRKAGHKEKKEKERISENYSDKSDVENADESSSSILKPLISPAAERIRFILGEEDDSPAPPQLFTELDELLAVDGQEMEWKETARWIKFEEKVEQGGERWSKPHVATLSLHSLFELRTCMEKGSIMLDREASSLPQLVEMIADHQIETGLLKPDLKDKVTYTLLRKHRHQTKKSNLRSLADIGKTVSSASRMFSNPDNGSPAMTHRNLTSSSLNDISDKPEKDQLKNKFMKKLPRDAEASNVLVGEVDFLDTPFIAFVRLQQAVMLGALTEVPVPTRFLFILLGPKGKAKSYHEIGRAIATLMSDEVFHDIAYKAKDRHDLIAGIDEFLDEVIVLPPGEWDPAIRIEPPKSLPSSDKRKNMYSGGENVQMNGDTPHDGGHGGGGHGDCEELQRTGRFCGGLIKDIKRKAPFFASDFYDALNIQALSAILFIYLATVTNAITFGGLLGDATDNMQGVLESFLGTAVSGAIFCLFAGQPLTILSSTGPVLVFERLLFNFSKDHSFDYLEFRLWIGLWSAFMCLILVATDASFLVQYFTRFTEEGFSSLISFIFIYDAFKKMIKLADYYPINSDFRVGYNTHFSCACLPPDPVNLSVSNDTTLAPEDLPTVSSTDMYHNATFDWAYLSKKECVKFGGKLVGNNCDFVPDITLMSFILFLGTYTSSMAMKKFKTSRYFPTTARKLISDFAIILSILIFCVIDALVGVDTPKLIVPSEFKPTSPHRGWFVPPFGGNPWWVCLAAAIPALLVTILIFMDQQITAVIVNRKEHKLKKGAGYHLDLFWVAILMVVCSFMALPWYVAATVISIAHIDSLKMETETSAPGEQPKFLGVREQRVTGTLVFILTGLSVFMAPILKFIPMPVLYGVFLYMGVASLNGVQFMDRLKLLLMPLKHQPDFIYLRHVPLRRVHLFTSLQVLCLALLWILKSTVAAIIFPVMILALVAVRKGMDYLFSQHDLSFLDDVIPEKDKKKKEDEKKKKKKKGSLDSDNDDSDCPYSEKVPSIKIPMDITEQQPFLSDNKPLDRERSSTFLERHTSC</sequence>
<dbReference type="EMBL" id="AF004017">
    <property type="protein sequence ID" value="AAC40034.1"/>
    <property type="molecule type" value="mRNA"/>
</dbReference>
<dbReference type="EMBL" id="AF027362">
    <property type="protein sequence ID" value="AAB83997.1"/>
    <property type="molecule type" value="mRNA"/>
</dbReference>
<dbReference type="EMBL" id="AF124441">
    <property type="protein sequence ID" value="AAF87312.1"/>
    <property type="molecule type" value="mRNA"/>
</dbReference>
<dbReference type="EMBL" id="AF254802">
    <property type="protein sequence ID" value="AAF87553.1"/>
    <property type="molecule type" value="mRNA"/>
</dbReference>
<dbReference type="EMBL" id="AF210250">
    <property type="protein sequence ID" value="AAF21040.1"/>
    <property type="molecule type" value="mRNA"/>
</dbReference>
<dbReference type="PIR" id="T13962">
    <property type="entry name" value="T13962"/>
</dbReference>
<dbReference type="PIR" id="T14110">
    <property type="entry name" value="T14110"/>
</dbReference>
<dbReference type="RefSeq" id="NP_445876.1">
    <molecule id="Q9JI66-1"/>
    <property type="nucleotide sequence ID" value="NM_053424.1"/>
</dbReference>
<dbReference type="RefSeq" id="XP_006250853.1">
    <molecule id="Q9JI66-3"/>
    <property type="nucleotide sequence ID" value="XM_006250791.5"/>
</dbReference>
<dbReference type="RefSeq" id="XP_038948439.1">
    <molecule id="Q9JI66-3"/>
    <property type="nucleotide sequence ID" value="XM_039092511.2"/>
</dbReference>
<dbReference type="SMR" id="Q9JI66"/>
<dbReference type="BioGRID" id="249983">
    <property type="interactions" value="4"/>
</dbReference>
<dbReference type="FunCoup" id="Q9JI66">
    <property type="interactions" value="1742"/>
</dbReference>
<dbReference type="IntAct" id="Q9JI66">
    <property type="interactions" value="2"/>
</dbReference>
<dbReference type="MINT" id="Q9JI66"/>
<dbReference type="STRING" id="10116.ENSRNOP00000004391"/>
<dbReference type="TCDB" id="2.A.31.2.2">
    <property type="family name" value="the anion exchanger (ae) family"/>
</dbReference>
<dbReference type="GlyCosmos" id="Q9JI66">
    <property type="glycosylation" value="2 sites, No reported glycans"/>
</dbReference>
<dbReference type="iPTMnet" id="Q9JI66"/>
<dbReference type="PhosphoSitePlus" id="Q9JI66"/>
<dbReference type="SwissPalm" id="Q9JI66"/>
<dbReference type="PaxDb" id="10116-ENSRNOP00000004391"/>
<dbReference type="GeneID" id="84484"/>
<dbReference type="KEGG" id="rno:84484"/>
<dbReference type="UCSC" id="RGD:68936">
    <molecule id="Q9JI66-1"/>
    <property type="organism name" value="rat"/>
</dbReference>
<dbReference type="AGR" id="RGD:68936"/>
<dbReference type="CTD" id="8671"/>
<dbReference type="RGD" id="68936">
    <property type="gene designation" value="Slc4a4"/>
</dbReference>
<dbReference type="VEuPathDB" id="HostDB:ENSRNOG00000003134"/>
<dbReference type="eggNOG" id="KOG1172">
    <property type="taxonomic scope" value="Eukaryota"/>
</dbReference>
<dbReference type="HOGENOM" id="CLU_002289_5_0_1"/>
<dbReference type="InParanoid" id="Q9JI66"/>
<dbReference type="PhylomeDB" id="Q9JI66"/>
<dbReference type="TreeFam" id="TF313630"/>
<dbReference type="Reactome" id="R-RNO-425381">
    <property type="pathway name" value="Bicarbonate transporters"/>
</dbReference>
<dbReference type="PRO" id="PR:Q9JI66"/>
<dbReference type="Proteomes" id="UP000002494">
    <property type="component" value="Chromosome 14"/>
</dbReference>
<dbReference type="Bgee" id="ENSRNOG00000003134">
    <property type="expression patterns" value="Expressed in adult mammalian kidney and 19 other cell types or tissues"/>
</dbReference>
<dbReference type="ExpressionAtlas" id="Q9JI66">
    <property type="expression patterns" value="baseline and differential"/>
</dbReference>
<dbReference type="GO" id="GO:0016323">
    <property type="term" value="C:basolateral plasma membrane"/>
    <property type="evidence" value="ECO:0000250"/>
    <property type="project" value="UniProtKB"/>
</dbReference>
<dbReference type="GO" id="GO:0009986">
    <property type="term" value="C:cell surface"/>
    <property type="evidence" value="ECO:0000266"/>
    <property type="project" value="RGD"/>
</dbReference>
<dbReference type="GO" id="GO:0016020">
    <property type="term" value="C:membrane"/>
    <property type="evidence" value="ECO:0000314"/>
    <property type="project" value="ARUK-UCL"/>
</dbReference>
<dbReference type="GO" id="GO:0005886">
    <property type="term" value="C:plasma membrane"/>
    <property type="evidence" value="ECO:0000266"/>
    <property type="project" value="RGD"/>
</dbReference>
<dbReference type="GO" id="GO:0042802">
    <property type="term" value="F:identical protein binding"/>
    <property type="evidence" value="ECO:0000266"/>
    <property type="project" value="RGD"/>
</dbReference>
<dbReference type="GO" id="GO:0008509">
    <property type="term" value="F:monoatomic anion transmembrane transporter activity"/>
    <property type="evidence" value="ECO:0007669"/>
    <property type="project" value="InterPro"/>
</dbReference>
<dbReference type="GO" id="GO:0008510">
    <property type="term" value="F:sodium:bicarbonate symporter activity"/>
    <property type="evidence" value="ECO:0000314"/>
    <property type="project" value="UniProtKB"/>
</dbReference>
<dbReference type="GO" id="GO:0005452">
    <property type="term" value="F:solute:inorganic anion antiporter activity"/>
    <property type="evidence" value="ECO:0007669"/>
    <property type="project" value="InterPro"/>
</dbReference>
<dbReference type="GO" id="GO:0015293">
    <property type="term" value="F:symporter activity"/>
    <property type="evidence" value="ECO:0000266"/>
    <property type="project" value="RGD"/>
</dbReference>
<dbReference type="GO" id="GO:0015701">
    <property type="term" value="P:bicarbonate transport"/>
    <property type="evidence" value="ECO:0000266"/>
    <property type="project" value="RGD"/>
</dbReference>
<dbReference type="GO" id="GO:0051649">
    <property type="term" value="P:establishment of localization in cell"/>
    <property type="evidence" value="ECO:0000266"/>
    <property type="project" value="RGD"/>
</dbReference>
<dbReference type="GO" id="GO:0072237">
    <property type="term" value="P:metanephric proximal tubule development"/>
    <property type="evidence" value="ECO:0000270"/>
    <property type="project" value="RGD"/>
</dbReference>
<dbReference type="GO" id="GO:0045821">
    <property type="term" value="P:positive regulation of glycolytic process"/>
    <property type="evidence" value="ECO:0000266"/>
    <property type="project" value="RGD"/>
</dbReference>
<dbReference type="GO" id="GO:0051453">
    <property type="term" value="P:regulation of intracellular pH"/>
    <property type="evidence" value="ECO:0000266"/>
    <property type="project" value="RGD"/>
</dbReference>
<dbReference type="GO" id="GO:0042391">
    <property type="term" value="P:regulation of membrane potential"/>
    <property type="evidence" value="ECO:0000266"/>
    <property type="project" value="RGD"/>
</dbReference>
<dbReference type="GO" id="GO:0006885">
    <property type="term" value="P:regulation of pH"/>
    <property type="evidence" value="ECO:0000304"/>
    <property type="project" value="RGD"/>
</dbReference>
<dbReference type="GO" id="GO:0036376">
    <property type="term" value="P:sodium ion export across plasma membrane"/>
    <property type="evidence" value="ECO:0000266"/>
    <property type="project" value="RGD"/>
</dbReference>
<dbReference type="GO" id="GO:0035725">
    <property type="term" value="P:sodium ion transmembrane transport"/>
    <property type="evidence" value="ECO:0000266"/>
    <property type="project" value="RGD"/>
</dbReference>
<dbReference type="GO" id="GO:0006814">
    <property type="term" value="P:sodium ion transport"/>
    <property type="evidence" value="ECO:0000250"/>
    <property type="project" value="UniProtKB"/>
</dbReference>
<dbReference type="GO" id="GO:0055085">
    <property type="term" value="P:transmembrane transport"/>
    <property type="evidence" value="ECO:0000266"/>
    <property type="project" value="RGD"/>
</dbReference>
<dbReference type="FunFam" id="1.10.287.570:FF:000001">
    <property type="entry name" value="Anion exchange protein"/>
    <property type="match status" value="1"/>
</dbReference>
<dbReference type="FunFam" id="3.40.930.10:FF:000002">
    <property type="entry name" value="Anion exchange protein"/>
    <property type="match status" value="1"/>
</dbReference>
<dbReference type="Gene3D" id="1.10.287.570">
    <property type="entry name" value="Helical hairpin bin"/>
    <property type="match status" value="1"/>
</dbReference>
<dbReference type="Gene3D" id="3.40.930.10">
    <property type="entry name" value="Mannitol-specific EII, Chain A"/>
    <property type="match status" value="1"/>
</dbReference>
<dbReference type="InterPro" id="IPR013769">
    <property type="entry name" value="Band3_cytoplasmic_dom"/>
</dbReference>
<dbReference type="InterPro" id="IPR011531">
    <property type="entry name" value="HCO3_transpt-like_TM_dom"/>
</dbReference>
<dbReference type="InterPro" id="IPR003020">
    <property type="entry name" value="HCO3_transpt_euk"/>
</dbReference>
<dbReference type="InterPro" id="IPR003024">
    <property type="entry name" value="Na/HCO3_transpt"/>
</dbReference>
<dbReference type="InterPro" id="IPR016152">
    <property type="entry name" value="PTrfase/Anion_transptr"/>
</dbReference>
<dbReference type="NCBIfam" id="TIGR00834">
    <property type="entry name" value="ae"/>
    <property type="match status" value="1"/>
</dbReference>
<dbReference type="PANTHER" id="PTHR11453">
    <property type="entry name" value="ANION EXCHANGE PROTEIN"/>
    <property type="match status" value="1"/>
</dbReference>
<dbReference type="PANTHER" id="PTHR11453:SF10">
    <property type="entry name" value="ELECTROGENIC SODIUM BICARBONATE COTRANSPORTER 1"/>
    <property type="match status" value="1"/>
</dbReference>
<dbReference type="Pfam" id="PF07565">
    <property type="entry name" value="Band_3_cyto"/>
    <property type="match status" value="1"/>
</dbReference>
<dbReference type="Pfam" id="PF00955">
    <property type="entry name" value="HCO3_cotransp"/>
    <property type="match status" value="1"/>
</dbReference>
<dbReference type="PRINTS" id="PR01231">
    <property type="entry name" value="HCO3TRNSPORT"/>
</dbReference>
<dbReference type="PRINTS" id="PR01232">
    <property type="entry name" value="NAHCO3TRSPRT"/>
</dbReference>
<dbReference type="SUPFAM" id="SSF55804">
    <property type="entry name" value="Phoshotransferase/anion transport protein"/>
    <property type="match status" value="1"/>
</dbReference>
<gene>
    <name type="primary">Slc4a4</name>
    <name type="synonym">Nbc</name>
    <name type="synonym">Nbc1</name>
    <name type="synonym">Nbce1</name>
    <name type="synonym">Rnbc1</name>
</gene>
<accession>Q9JI66</accession>
<accession>O35422</accession>
<accession>O54815</accession>
<accession>Q9JJ32</accession>
<accession>Q9QXH6</accession>
<comment type="function">
    <text evidence="7 8 12 15">Electrogenic sodium/bicarbonate cotransporter with a Na(+):HCO3(-) stoichiometry varying from 1:2 to 1:3. May regulate bicarbonate influx/efflux at the basolateral membrane of cells and regulate intracellular pH.</text>
</comment>
<comment type="catalytic activity">
    <reaction evidence="7 8">
        <text>2 hydrogencarbonate(out) + Na(+)(out) = 2 hydrogencarbonate(in) + Na(+)(in)</text>
        <dbReference type="Rhea" id="RHEA:72215"/>
        <dbReference type="ChEBI" id="CHEBI:17544"/>
        <dbReference type="ChEBI" id="CHEBI:29101"/>
    </reaction>
</comment>
<comment type="catalytic activity">
    <reaction evidence="7 8">
        <text>3 hydrogencarbonate(out) + Na(+)(out) = 3 hydrogencarbonate(in) + Na(+)(in)</text>
        <dbReference type="Rhea" id="RHEA:72219"/>
        <dbReference type="ChEBI" id="CHEBI:17544"/>
        <dbReference type="ChEBI" id="CHEBI:29101"/>
    </reaction>
</comment>
<comment type="catalytic activity">
    <molecule>Isoform 2</molecule>
    <reaction evidence="12 15">
        <text>2 hydrogencarbonate(out) + Na(+)(out) = 2 hydrogencarbonate(in) + Na(+)(in)</text>
        <dbReference type="Rhea" id="RHEA:72215"/>
        <dbReference type="ChEBI" id="CHEBI:17544"/>
        <dbReference type="ChEBI" id="CHEBI:29101"/>
    </reaction>
</comment>
<comment type="catalytic activity">
    <molecule>Isoform 2</molecule>
    <reaction evidence="12 15">
        <text>3 hydrogencarbonate(out) + Na(+)(out) = 3 hydrogencarbonate(in) + Na(+)(in)</text>
        <dbReference type="Rhea" id="RHEA:72219"/>
        <dbReference type="ChEBI" id="CHEBI:17544"/>
        <dbReference type="ChEBI" id="CHEBI:29101"/>
    </reaction>
</comment>
<comment type="activity regulation">
    <text evidence="8">Inhibited by 4,4'-diisothiocyanatostilbene-2,2'-disulfonic acid (DIDS).</text>
</comment>
<comment type="subunit">
    <text evidence="2 3 4">Homodimer. Interacts with CA2/carbonic anhydrase 2 and CA4/carbonic anhydrase 4 which may regulate transporter activity. Isoform 1 but not isoform 2 interacts with AHCYL1 (via PEST domain when phosphorylated); the interaction increases SLC4A4 isoform 1 activity. Interacts with AHCYL2.</text>
</comment>
<comment type="subcellular location">
    <subcellularLocation>
        <location evidence="21">Basolateral cell membrane</location>
        <topology evidence="5">Multi-pass membrane protein</topology>
    </subcellularLocation>
    <subcellularLocation>
        <location evidence="4">Cell membrane</location>
        <topology evidence="5">Multi-pass membrane protein</topology>
    </subcellularLocation>
</comment>
<comment type="alternative products">
    <event type="alternative splicing"/>
    <isoform>
        <id>Q9JI66-1</id>
        <name>1</name>
        <name>bNBC1</name>
        <name>NBCe1-B</name>
        <name>pNBC1</name>
        <name>pNBC-1</name>
        <name>rb1NBC</name>
        <sequence type="displayed"/>
    </isoform>
    <isoform>
        <id>Q9JI66-2</id>
        <name>2</name>
        <name>kNBC1</name>
        <name>kNBC-1</name>
        <name>NBCe1-A</name>
        <name>rkNBC</name>
        <name>rkNBC1</name>
        <sequence type="described" ref="VSP_016717 VSP_016718"/>
    </isoform>
    <isoform>
        <id>Q9JI66-3</id>
        <name>3</name>
        <name>NBCe1-C</name>
        <name>rb2NBC</name>
        <sequence type="described" ref="VSP_016719"/>
    </isoform>
</comment>
<comment type="tissue specificity">
    <text evidence="7 8 9 11 13 15 16">Specifically expressed in kidney and to a lower extent in liver, lung, spleen, brain, skeletal muscle and heart. In kidney, expressed in proximal tubules at the corticomedullary junction. Isoform 2 is specifically expressed in kidney. Isoform 1 is expressed in kidney and pancreas while isoform 3 is specifically expressed in brain (at protein level). In brain, isoform 1 is expressed in astrocytes while isoform 3 is expressed in neurons (at protein level). In the eye, isoform 1 is expressed in cornea, conjunctiva, lens epithelium, ciliary bodies and retina while isoform 2 is detected only in the conjunctiva.</text>
</comment>
<comment type="developmental stage">
    <text evidence="7">Expression is first detected at 17 dpc in spinal cord and starts in forebrain at birth. Higher expression in brain is detected at postnatal day 15 and persists throughout adulthood.</text>
</comment>
<comment type="induction">
    <text evidence="10 14 16">Down-regulated after cadmium-intoxication and sodium or bicarbonate loading (at protein level). Down-regulated by HCO3[-] loading.</text>
</comment>
<comment type="PTM">
    <text evidence="2 4">Phosphorylation of Ser-1026 by PKA increases the binding of CA2 and changes the Na(+):HCO3(-) stoichiometry of the transporter from 3:1 to 2:1. Phosphorylated in presence of STK39 and dephosphorylated in presence of PP1 phosphatase; phosphorylation seems to inhibit SLC4A4 activity.</text>
</comment>
<comment type="PTM">
    <molecule>Isoform 2</molecule>
    <text evidence="12">N-glycosylation is not necessary for the transporter basic functions.</text>
</comment>
<comment type="similarity">
    <text evidence="20">Belongs to the anion exchanger (TC 2.A.31) family.</text>
</comment>